<comment type="function">
    <text evidence="1">This is one of the proteins that bind and probably mediate the attachment of the 5S RNA into the large ribosomal subunit, where it forms part of the central protuberance.</text>
</comment>
<comment type="subunit">
    <text evidence="1">Part of the 50S ribosomal subunit; part of the 5S rRNA/L5/L18/L25 subcomplex. Contacts the 5S and 23S rRNAs.</text>
</comment>
<comment type="similarity">
    <text evidence="1">Belongs to the universal ribosomal protein uL18 family.</text>
</comment>
<reference key="1">
    <citation type="journal article" date="2008" name="BMC Genomics">
        <title>The genome of Aeromonas salmonicida subsp. salmonicida A449: insights into the evolution of a fish pathogen.</title>
        <authorList>
            <person name="Reith M.E."/>
            <person name="Singh R.K."/>
            <person name="Curtis B."/>
            <person name="Boyd J.M."/>
            <person name="Bouevitch A."/>
            <person name="Kimball J."/>
            <person name="Munholland J."/>
            <person name="Murphy C."/>
            <person name="Sarty D."/>
            <person name="Williams J."/>
            <person name="Nash J.H."/>
            <person name="Johnson S.C."/>
            <person name="Brown L.L."/>
        </authorList>
    </citation>
    <scope>NUCLEOTIDE SEQUENCE [LARGE SCALE GENOMIC DNA]</scope>
    <source>
        <strain>A449</strain>
    </source>
</reference>
<dbReference type="EMBL" id="CP000644">
    <property type="protein sequence ID" value="ABO92012.1"/>
    <property type="molecule type" value="Genomic_DNA"/>
</dbReference>
<dbReference type="RefSeq" id="WP_005319717.1">
    <property type="nucleotide sequence ID" value="NC_009348.1"/>
</dbReference>
<dbReference type="SMR" id="A4SSZ0"/>
<dbReference type="STRING" id="29491.GCA_000820065_03481"/>
<dbReference type="GeneID" id="92721514"/>
<dbReference type="KEGG" id="asa:ASA_4071"/>
<dbReference type="eggNOG" id="COG0256">
    <property type="taxonomic scope" value="Bacteria"/>
</dbReference>
<dbReference type="HOGENOM" id="CLU_098841_0_1_6"/>
<dbReference type="Proteomes" id="UP000000225">
    <property type="component" value="Chromosome"/>
</dbReference>
<dbReference type="GO" id="GO:0022625">
    <property type="term" value="C:cytosolic large ribosomal subunit"/>
    <property type="evidence" value="ECO:0007669"/>
    <property type="project" value="TreeGrafter"/>
</dbReference>
<dbReference type="GO" id="GO:0008097">
    <property type="term" value="F:5S rRNA binding"/>
    <property type="evidence" value="ECO:0007669"/>
    <property type="project" value="TreeGrafter"/>
</dbReference>
<dbReference type="GO" id="GO:0003735">
    <property type="term" value="F:structural constituent of ribosome"/>
    <property type="evidence" value="ECO:0007669"/>
    <property type="project" value="InterPro"/>
</dbReference>
<dbReference type="GO" id="GO:0006412">
    <property type="term" value="P:translation"/>
    <property type="evidence" value="ECO:0007669"/>
    <property type="project" value="UniProtKB-UniRule"/>
</dbReference>
<dbReference type="CDD" id="cd00432">
    <property type="entry name" value="Ribosomal_L18_L5e"/>
    <property type="match status" value="1"/>
</dbReference>
<dbReference type="FunFam" id="3.30.420.100:FF:000001">
    <property type="entry name" value="50S ribosomal protein L18"/>
    <property type="match status" value="1"/>
</dbReference>
<dbReference type="Gene3D" id="3.30.420.100">
    <property type="match status" value="1"/>
</dbReference>
<dbReference type="HAMAP" id="MF_01337_B">
    <property type="entry name" value="Ribosomal_uL18_B"/>
    <property type="match status" value="1"/>
</dbReference>
<dbReference type="InterPro" id="IPR004389">
    <property type="entry name" value="Ribosomal_uL18_bac-type"/>
</dbReference>
<dbReference type="InterPro" id="IPR005484">
    <property type="entry name" value="Ribosomal_uL18_bac/euk"/>
</dbReference>
<dbReference type="NCBIfam" id="TIGR00060">
    <property type="entry name" value="L18_bact"/>
    <property type="match status" value="1"/>
</dbReference>
<dbReference type="PANTHER" id="PTHR12899">
    <property type="entry name" value="39S RIBOSOMAL PROTEIN L18, MITOCHONDRIAL"/>
    <property type="match status" value="1"/>
</dbReference>
<dbReference type="PANTHER" id="PTHR12899:SF3">
    <property type="entry name" value="LARGE RIBOSOMAL SUBUNIT PROTEIN UL18M"/>
    <property type="match status" value="1"/>
</dbReference>
<dbReference type="Pfam" id="PF00861">
    <property type="entry name" value="Ribosomal_L18p"/>
    <property type="match status" value="1"/>
</dbReference>
<dbReference type="SUPFAM" id="SSF53137">
    <property type="entry name" value="Translational machinery components"/>
    <property type="match status" value="1"/>
</dbReference>
<sequence length="117" mass="12479">MDKKAARLRRATRARKKMQELGATRLVVHRTPRHIYAQVIAANGSEVLASASTVEKAISEALKYSGNADAATAVGKAIAERAIAKGVQNVSFDRSGFKYHGRVAALATAARDAGLQF</sequence>
<name>RL18_AERS4</name>
<organism>
    <name type="scientific">Aeromonas salmonicida (strain A449)</name>
    <dbReference type="NCBI Taxonomy" id="382245"/>
    <lineage>
        <taxon>Bacteria</taxon>
        <taxon>Pseudomonadati</taxon>
        <taxon>Pseudomonadota</taxon>
        <taxon>Gammaproteobacteria</taxon>
        <taxon>Aeromonadales</taxon>
        <taxon>Aeromonadaceae</taxon>
        <taxon>Aeromonas</taxon>
    </lineage>
</organism>
<keyword id="KW-0687">Ribonucleoprotein</keyword>
<keyword id="KW-0689">Ribosomal protein</keyword>
<keyword id="KW-0694">RNA-binding</keyword>
<keyword id="KW-0699">rRNA-binding</keyword>
<gene>
    <name evidence="1" type="primary">rplR</name>
    <name type="ordered locus">ASA_4071</name>
</gene>
<feature type="chain" id="PRO_1000052982" description="Large ribosomal subunit protein uL18">
    <location>
        <begin position="1"/>
        <end position="117"/>
    </location>
</feature>
<protein>
    <recommendedName>
        <fullName evidence="1">Large ribosomal subunit protein uL18</fullName>
    </recommendedName>
    <alternativeName>
        <fullName evidence="2">50S ribosomal protein L18</fullName>
    </alternativeName>
</protein>
<evidence type="ECO:0000255" key="1">
    <source>
        <dbReference type="HAMAP-Rule" id="MF_01337"/>
    </source>
</evidence>
<evidence type="ECO:0000305" key="2"/>
<proteinExistence type="inferred from homology"/>
<accession>A4SSZ0</accession>